<evidence type="ECO:0000255" key="1">
    <source>
        <dbReference type="HAMAP-Rule" id="MF_00096"/>
    </source>
</evidence>
<proteinExistence type="inferred from homology"/>
<keyword id="KW-0067">ATP-binding</keyword>
<keyword id="KW-0227">DNA damage</keyword>
<keyword id="KW-0234">DNA repair</keyword>
<keyword id="KW-0238">DNA-binding</keyword>
<keyword id="KW-0547">Nucleotide-binding</keyword>
<comment type="function">
    <text evidence="1">This protein is involved in the repair of mismatches in DNA. It is possible that it carries out the mismatch recognition step. This protein has a weak ATPase activity.</text>
</comment>
<comment type="similarity">
    <text evidence="1">Belongs to the DNA mismatch repair MutS family.</text>
</comment>
<name>MUTS_CHLCH</name>
<reference key="1">
    <citation type="submission" date="2005-08" db="EMBL/GenBank/DDBJ databases">
        <title>Complete sequence of Chlorobium chlorochromatii CaD3.</title>
        <authorList>
            <consortium name="US DOE Joint Genome Institute"/>
            <person name="Copeland A."/>
            <person name="Lucas S."/>
            <person name="Lapidus A."/>
            <person name="Barry K."/>
            <person name="Detter J.C."/>
            <person name="Glavina T."/>
            <person name="Hammon N."/>
            <person name="Israni S."/>
            <person name="Pitluck S."/>
            <person name="Bryant D."/>
            <person name="Schmutz J."/>
            <person name="Larimer F."/>
            <person name="Land M."/>
            <person name="Kyrpides N."/>
            <person name="Ivanova N."/>
            <person name="Richardson P."/>
        </authorList>
    </citation>
    <scope>NUCLEOTIDE SEQUENCE [LARGE SCALE GENOMIC DNA]</scope>
    <source>
        <strain>CaD3</strain>
    </source>
</reference>
<gene>
    <name evidence="1" type="primary">mutS</name>
    <name type="ordered locus">Cag_1317</name>
</gene>
<dbReference type="EMBL" id="CP000108">
    <property type="protein sequence ID" value="ABB28577.1"/>
    <property type="molecule type" value="Genomic_DNA"/>
</dbReference>
<dbReference type="SMR" id="Q3AQZ8"/>
<dbReference type="STRING" id="340177.Cag_1317"/>
<dbReference type="KEGG" id="cch:Cag_1317"/>
<dbReference type="eggNOG" id="COG0249">
    <property type="taxonomic scope" value="Bacteria"/>
</dbReference>
<dbReference type="HOGENOM" id="CLU_002472_3_1_10"/>
<dbReference type="OrthoDB" id="9802448at2"/>
<dbReference type="GO" id="GO:0005829">
    <property type="term" value="C:cytosol"/>
    <property type="evidence" value="ECO:0007669"/>
    <property type="project" value="TreeGrafter"/>
</dbReference>
<dbReference type="GO" id="GO:0005524">
    <property type="term" value="F:ATP binding"/>
    <property type="evidence" value="ECO:0007669"/>
    <property type="project" value="UniProtKB-UniRule"/>
</dbReference>
<dbReference type="GO" id="GO:0140664">
    <property type="term" value="F:ATP-dependent DNA damage sensor activity"/>
    <property type="evidence" value="ECO:0007669"/>
    <property type="project" value="InterPro"/>
</dbReference>
<dbReference type="GO" id="GO:0003684">
    <property type="term" value="F:damaged DNA binding"/>
    <property type="evidence" value="ECO:0007669"/>
    <property type="project" value="UniProtKB-UniRule"/>
</dbReference>
<dbReference type="GO" id="GO:0030983">
    <property type="term" value="F:mismatched DNA binding"/>
    <property type="evidence" value="ECO:0007669"/>
    <property type="project" value="InterPro"/>
</dbReference>
<dbReference type="GO" id="GO:0006298">
    <property type="term" value="P:mismatch repair"/>
    <property type="evidence" value="ECO:0007669"/>
    <property type="project" value="UniProtKB-UniRule"/>
</dbReference>
<dbReference type="CDD" id="cd03284">
    <property type="entry name" value="ABC_MutS1"/>
    <property type="match status" value="1"/>
</dbReference>
<dbReference type="FunFam" id="3.40.1170.10:FF:000001">
    <property type="entry name" value="DNA mismatch repair protein MutS"/>
    <property type="match status" value="1"/>
</dbReference>
<dbReference type="FunFam" id="3.40.50.300:FF:000870">
    <property type="entry name" value="MutS protein homolog 4"/>
    <property type="match status" value="1"/>
</dbReference>
<dbReference type="Gene3D" id="1.10.1420.10">
    <property type="match status" value="2"/>
</dbReference>
<dbReference type="Gene3D" id="3.40.1170.10">
    <property type="entry name" value="DNA repair protein MutS, domain I"/>
    <property type="match status" value="1"/>
</dbReference>
<dbReference type="Gene3D" id="3.30.420.110">
    <property type="entry name" value="MutS, connector domain"/>
    <property type="match status" value="1"/>
</dbReference>
<dbReference type="Gene3D" id="3.40.50.300">
    <property type="entry name" value="P-loop containing nucleotide triphosphate hydrolases"/>
    <property type="match status" value="1"/>
</dbReference>
<dbReference type="HAMAP" id="MF_00096">
    <property type="entry name" value="MutS"/>
    <property type="match status" value="1"/>
</dbReference>
<dbReference type="InterPro" id="IPR005748">
    <property type="entry name" value="DNA_mismatch_repair_MutS"/>
</dbReference>
<dbReference type="InterPro" id="IPR007695">
    <property type="entry name" value="DNA_mismatch_repair_MutS-lik_N"/>
</dbReference>
<dbReference type="InterPro" id="IPR017261">
    <property type="entry name" value="DNA_mismatch_repair_MutS/MSH"/>
</dbReference>
<dbReference type="InterPro" id="IPR000432">
    <property type="entry name" value="DNA_mismatch_repair_MutS_C"/>
</dbReference>
<dbReference type="InterPro" id="IPR007861">
    <property type="entry name" value="DNA_mismatch_repair_MutS_clamp"/>
</dbReference>
<dbReference type="InterPro" id="IPR007696">
    <property type="entry name" value="DNA_mismatch_repair_MutS_core"/>
</dbReference>
<dbReference type="InterPro" id="IPR016151">
    <property type="entry name" value="DNA_mismatch_repair_MutS_N"/>
</dbReference>
<dbReference type="InterPro" id="IPR036187">
    <property type="entry name" value="DNA_mismatch_repair_MutS_sf"/>
</dbReference>
<dbReference type="InterPro" id="IPR007860">
    <property type="entry name" value="DNA_mmatch_repair_MutS_con_dom"/>
</dbReference>
<dbReference type="InterPro" id="IPR045076">
    <property type="entry name" value="MutS"/>
</dbReference>
<dbReference type="InterPro" id="IPR036678">
    <property type="entry name" value="MutS_con_dom_sf"/>
</dbReference>
<dbReference type="InterPro" id="IPR027417">
    <property type="entry name" value="P-loop_NTPase"/>
</dbReference>
<dbReference type="NCBIfam" id="TIGR01070">
    <property type="entry name" value="mutS1"/>
    <property type="match status" value="1"/>
</dbReference>
<dbReference type="NCBIfam" id="NF003810">
    <property type="entry name" value="PRK05399.1"/>
    <property type="match status" value="1"/>
</dbReference>
<dbReference type="PANTHER" id="PTHR11361:SF34">
    <property type="entry name" value="DNA MISMATCH REPAIR PROTEIN MSH1, MITOCHONDRIAL"/>
    <property type="match status" value="1"/>
</dbReference>
<dbReference type="PANTHER" id="PTHR11361">
    <property type="entry name" value="DNA MISMATCH REPAIR PROTEIN MUTS FAMILY MEMBER"/>
    <property type="match status" value="1"/>
</dbReference>
<dbReference type="Pfam" id="PF01624">
    <property type="entry name" value="MutS_I"/>
    <property type="match status" value="1"/>
</dbReference>
<dbReference type="Pfam" id="PF05188">
    <property type="entry name" value="MutS_II"/>
    <property type="match status" value="1"/>
</dbReference>
<dbReference type="Pfam" id="PF05192">
    <property type="entry name" value="MutS_III"/>
    <property type="match status" value="1"/>
</dbReference>
<dbReference type="Pfam" id="PF05190">
    <property type="entry name" value="MutS_IV"/>
    <property type="match status" value="1"/>
</dbReference>
<dbReference type="Pfam" id="PF00488">
    <property type="entry name" value="MutS_V"/>
    <property type="match status" value="1"/>
</dbReference>
<dbReference type="PIRSF" id="PIRSF037677">
    <property type="entry name" value="DNA_mis_repair_Msh6"/>
    <property type="match status" value="1"/>
</dbReference>
<dbReference type="SMART" id="SM00534">
    <property type="entry name" value="MUTSac"/>
    <property type="match status" value="1"/>
</dbReference>
<dbReference type="SMART" id="SM00533">
    <property type="entry name" value="MUTSd"/>
    <property type="match status" value="1"/>
</dbReference>
<dbReference type="SUPFAM" id="SSF55271">
    <property type="entry name" value="DNA repair protein MutS, domain I"/>
    <property type="match status" value="1"/>
</dbReference>
<dbReference type="SUPFAM" id="SSF53150">
    <property type="entry name" value="DNA repair protein MutS, domain II"/>
    <property type="match status" value="1"/>
</dbReference>
<dbReference type="SUPFAM" id="SSF48334">
    <property type="entry name" value="DNA repair protein MutS, domain III"/>
    <property type="match status" value="1"/>
</dbReference>
<dbReference type="SUPFAM" id="SSF52540">
    <property type="entry name" value="P-loop containing nucleoside triphosphate hydrolases"/>
    <property type="match status" value="1"/>
</dbReference>
<dbReference type="PROSITE" id="PS00486">
    <property type="entry name" value="DNA_MISMATCH_REPAIR_2"/>
    <property type="match status" value="1"/>
</dbReference>
<feature type="chain" id="PRO_0000224362" description="DNA mismatch repair protein MutS">
    <location>
        <begin position="1"/>
        <end position="873"/>
    </location>
</feature>
<feature type="binding site" evidence="1">
    <location>
        <begin position="628"/>
        <end position="635"/>
    </location>
    <ligand>
        <name>ATP</name>
        <dbReference type="ChEBI" id="CHEBI:30616"/>
    </ligand>
</feature>
<protein>
    <recommendedName>
        <fullName evidence="1">DNA mismatch repair protein MutS</fullName>
    </recommendedName>
</protein>
<sequence>MAKEQSGTKEHSPMMRQYLEVKERYPDYLLLFRVGDFYETFFDDAITVSTALNIVLTKRTADIPMAGFPYHASEGYIAKLIKKGYKVAVCDQVEDPADAKGIVRREITDIVTPGVTYSDKLLDDRHNNYLAGVAFLKEGKTLMAGVAFIDVTTAEFRITTLLPEELPHFLAGLHPSEILFSTQEKERTLLLKKSLPSETLISLLEPWMFSEEQSQTVLLRHFKTHSLKGFGIETAGGNRAALVAAGVILQYLEETRQNSLSYITRIGELHHTEFMSLDQQTKRNLEIISSMQDGSLSGSLLQVMDRTRNPMGARLLRRWLQRPLKKLTNIQERHNAVEELVENRTLRESVAEQLAAINDLERSLARIATLRTIPREVRQLGISLAAIPTLQALLSDVTAPRLQALTAALQPLPKLAEQIESAIDPDAGATMRDGGYIRAGYNEELDDLRSIASTAKDRLMQIQQEEREATAISSLKVSYNKVFGYYIEISRANSDKVPAYYEKKQTLVNAERYTIPALKEYEEKILHAEEKSLLLEAELFRNLCQQIATEAATVQANAALLAELDALCSFAECAVAFDYTKPTMHEGTTLSITAGRHPVLERLLGAEESYIPNDCHFDDKQTMLIITGPNMAGKSSYLRQIGLIVLLAQAGSFVPAESASLGVVDRIFTRVGASDNLTSGESTFLVEMNEAANILNNATERSLLLLDEIGRGTSTFDGMSIAWSMCEYIVHTIGAKTLFATHYHELAELEERLKGVVNYNATVVETAERVIFLRKIVRGATDNSYGIEVAKMAGMPNDVISRAREILAGLEKRDVEIPRQKAPKVNTMQISLFEETDNQLRNAVEAVDVNRLTPLEALLELQKLQEMARSGGY</sequence>
<organism>
    <name type="scientific">Chlorobium chlorochromatii (strain CaD3)</name>
    <dbReference type="NCBI Taxonomy" id="340177"/>
    <lineage>
        <taxon>Bacteria</taxon>
        <taxon>Pseudomonadati</taxon>
        <taxon>Chlorobiota</taxon>
        <taxon>Chlorobiia</taxon>
        <taxon>Chlorobiales</taxon>
        <taxon>Chlorobiaceae</taxon>
        <taxon>Chlorobium/Pelodictyon group</taxon>
        <taxon>Chlorobium</taxon>
    </lineage>
</organism>
<accession>Q3AQZ8</accession>